<comment type="function">
    <text evidence="1">Responsible for synthesis of pseudouridine from uracil-55 in the psi GC loop of transfer RNAs.</text>
</comment>
<comment type="catalytic activity">
    <reaction evidence="1">
        <text>uridine(55) in tRNA = pseudouridine(55) in tRNA</text>
        <dbReference type="Rhea" id="RHEA:42532"/>
        <dbReference type="Rhea" id="RHEA-COMP:10101"/>
        <dbReference type="Rhea" id="RHEA-COMP:10102"/>
        <dbReference type="ChEBI" id="CHEBI:65314"/>
        <dbReference type="ChEBI" id="CHEBI:65315"/>
        <dbReference type="EC" id="5.4.99.25"/>
    </reaction>
</comment>
<comment type="similarity">
    <text evidence="1">Belongs to the pseudouridine synthase TruB family. Type 1 subfamily.</text>
</comment>
<accession>Q7MAY1</accession>
<sequence>MGRHRRGRDIHGVLLLDKPQDISSNDALQKVKRIFNASKAGHTGALDPLATGMLPVCLGEATKFSQFLLDSDKRYRVIARLGQRTDTSDSHGQIISERAIQLSQVQLDAALDKFRGDTMQIPSMYSALKYQGKPLYEYARQGIEVEREARPITVYELQFIRWENDELELEIHCSKGTYIRTIIDDLGELLGCGAHVIYLRRLQVANYPNDRMVTLEQLYELQKQAKDQEIPVGELIDSLLLPMDSAIAHFPEVNLIPVVAAYFKQGQAVRSAKSPALVESMVRVTEGDERKFIGIAVINDDGLVAPRRLVVESRD</sequence>
<protein>
    <recommendedName>
        <fullName evidence="1">tRNA pseudouridine synthase B</fullName>
        <ecNumber evidence="1">5.4.99.25</ecNumber>
    </recommendedName>
    <alternativeName>
        <fullName evidence="1">tRNA pseudouridine(55) synthase</fullName>
        <shortName evidence="1">Psi55 synthase</shortName>
    </alternativeName>
    <alternativeName>
        <fullName evidence="1">tRNA pseudouridylate synthase</fullName>
    </alternativeName>
    <alternativeName>
        <fullName evidence="1">tRNA-uridine isomerase</fullName>
    </alternativeName>
</protein>
<proteinExistence type="inferred from homology"/>
<reference key="1">
    <citation type="journal article" date="2003" name="Nat. Biotechnol.">
        <title>The genome sequence of the entomopathogenic bacterium Photorhabdus luminescens.</title>
        <authorList>
            <person name="Duchaud E."/>
            <person name="Rusniok C."/>
            <person name="Frangeul L."/>
            <person name="Buchrieser C."/>
            <person name="Givaudan A."/>
            <person name="Taourit S."/>
            <person name="Bocs S."/>
            <person name="Boursaux-Eude C."/>
            <person name="Chandler M."/>
            <person name="Charles J.-F."/>
            <person name="Dassa E."/>
            <person name="Derose R."/>
            <person name="Derzelle S."/>
            <person name="Freyssinet G."/>
            <person name="Gaudriault S."/>
            <person name="Medigue C."/>
            <person name="Lanois A."/>
            <person name="Powell K."/>
            <person name="Siguier P."/>
            <person name="Vincent R."/>
            <person name="Wingate V."/>
            <person name="Zouine M."/>
            <person name="Glaser P."/>
            <person name="Boemare N."/>
            <person name="Danchin A."/>
            <person name="Kunst F."/>
        </authorList>
    </citation>
    <scope>NUCLEOTIDE SEQUENCE [LARGE SCALE GENOMIC DNA]</scope>
    <source>
        <strain>DSM 15139 / CIP 105565 / TT01</strain>
    </source>
</reference>
<organism>
    <name type="scientific">Photorhabdus laumondii subsp. laumondii (strain DSM 15139 / CIP 105565 / TT01)</name>
    <name type="common">Photorhabdus luminescens subsp. laumondii</name>
    <dbReference type="NCBI Taxonomy" id="243265"/>
    <lineage>
        <taxon>Bacteria</taxon>
        <taxon>Pseudomonadati</taxon>
        <taxon>Pseudomonadota</taxon>
        <taxon>Gammaproteobacteria</taxon>
        <taxon>Enterobacterales</taxon>
        <taxon>Morganellaceae</taxon>
        <taxon>Photorhabdus</taxon>
    </lineage>
</organism>
<evidence type="ECO:0000255" key="1">
    <source>
        <dbReference type="HAMAP-Rule" id="MF_01080"/>
    </source>
</evidence>
<name>TRUB_PHOLL</name>
<feature type="chain" id="PRO_0000121882" description="tRNA pseudouridine synthase B">
    <location>
        <begin position="1"/>
        <end position="315"/>
    </location>
</feature>
<feature type="active site" description="Nucleophile" evidence="1">
    <location>
        <position position="47"/>
    </location>
</feature>
<feature type="binding site" evidence="1">
    <location>
        <position position="42"/>
    </location>
    <ligand>
        <name>substrate</name>
    </ligand>
</feature>
<feature type="binding site" evidence="1">
    <location>
        <position position="75"/>
    </location>
    <ligand>
        <name>substrate</name>
    </ligand>
</feature>
<feature type="binding site" evidence="1">
    <location>
        <position position="178"/>
    </location>
    <ligand>
        <name>substrate</name>
    </ligand>
</feature>
<feature type="binding site" evidence="1">
    <location>
        <position position="199"/>
    </location>
    <ligand>
        <name>substrate</name>
    </ligand>
</feature>
<keyword id="KW-0413">Isomerase</keyword>
<keyword id="KW-1185">Reference proteome</keyword>
<keyword id="KW-0819">tRNA processing</keyword>
<gene>
    <name evidence="1" type="primary">truB</name>
    <name type="ordered locus">plu4527</name>
</gene>
<dbReference type="EC" id="5.4.99.25" evidence="1"/>
<dbReference type="EMBL" id="BX571874">
    <property type="protein sequence ID" value="CAE16899.1"/>
    <property type="molecule type" value="Genomic_DNA"/>
</dbReference>
<dbReference type="RefSeq" id="WP_011148603.1">
    <property type="nucleotide sequence ID" value="NC_005126.1"/>
</dbReference>
<dbReference type="SMR" id="Q7MAY1"/>
<dbReference type="STRING" id="243265.plu4527"/>
<dbReference type="GeneID" id="48850736"/>
<dbReference type="KEGG" id="plu:plu4527"/>
<dbReference type="eggNOG" id="COG0130">
    <property type="taxonomic scope" value="Bacteria"/>
</dbReference>
<dbReference type="HOGENOM" id="CLU_032087_0_3_6"/>
<dbReference type="OrthoDB" id="9802309at2"/>
<dbReference type="Proteomes" id="UP000002514">
    <property type="component" value="Chromosome"/>
</dbReference>
<dbReference type="GO" id="GO:0003723">
    <property type="term" value="F:RNA binding"/>
    <property type="evidence" value="ECO:0007669"/>
    <property type="project" value="InterPro"/>
</dbReference>
<dbReference type="GO" id="GO:0160148">
    <property type="term" value="F:tRNA pseudouridine(55) synthase activity"/>
    <property type="evidence" value="ECO:0007669"/>
    <property type="project" value="UniProtKB-EC"/>
</dbReference>
<dbReference type="GO" id="GO:1990481">
    <property type="term" value="P:mRNA pseudouridine synthesis"/>
    <property type="evidence" value="ECO:0007669"/>
    <property type="project" value="TreeGrafter"/>
</dbReference>
<dbReference type="GO" id="GO:0031119">
    <property type="term" value="P:tRNA pseudouridine synthesis"/>
    <property type="evidence" value="ECO:0007669"/>
    <property type="project" value="UniProtKB-UniRule"/>
</dbReference>
<dbReference type="CDD" id="cd02573">
    <property type="entry name" value="PseudoU_synth_EcTruB"/>
    <property type="match status" value="1"/>
</dbReference>
<dbReference type="CDD" id="cd21152">
    <property type="entry name" value="PUA_TruB_bacterial"/>
    <property type="match status" value="1"/>
</dbReference>
<dbReference type="FunFam" id="2.30.130.10:FF:000004">
    <property type="entry name" value="tRNA pseudouridine synthase B"/>
    <property type="match status" value="1"/>
</dbReference>
<dbReference type="FunFam" id="3.30.2350.10:FF:000003">
    <property type="entry name" value="tRNA pseudouridine synthase B"/>
    <property type="match status" value="1"/>
</dbReference>
<dbReference type="Gene3D" id="3.30.2350.10">
    <property type="entry name" value="Pseudouridine synthase"/>
    <property type="match status" value="1"/>
</dbReference>
<dbReference type="Gene3D" id="2.30.130.10">
    <property type="entry name" value="PUA domain"/>
    <property type="match status" value="1"/>
</dbReference>
<dbReference type="HAMAP" id="MF_01080">
    <property type="entry name" value="TruB_bact"/>
    <property type="match status" value="1"/>
</dbReference>
<dbReference type="InterPro" id="IPR020103">
    <property type="entry name" value="PsdUridine_synth_cat_dom_sf"/>
</dbReference>
<dbReference type="InterPro" id="IPR002501">
    <property type="entry name" value="PsdUridine_synth_N"/>
</dbReference>
<dbReference type="InterPro" id="IPR015947">
    <property type="entry name" value="PUA-like_sf"/>
</dbReference>
<dbReference type="InterPro" id="IPR036974">
    <property type="entry name" value="PUA_sf"/>
</dbReference>
<dbReference type="InterPro" id="IPR014780">
    <property type="entry name" value="tRNA_psdUridine_synth_TruB"/>
</dbReference>
<dbReference type="InterPro" id="IPR015240">
    <property type="entry name" value="tRNA_sdUridine_synth_fam1_C"/>
</dbReference>
<dbReference type="InterPro" id="IPR032819">
    <property type="entry name" value="TruB_C"/>
</dbReference>
<dbReference type="NCBIfam" id="TIGR00431">
    <property type="entry name" value="TruB"/>
    <property type="match status" value="1"/>
</dbReference>
<dbReference type="PANTHER" id="PTHR13767:SF2">
    <property type="entry name" value="PSEUDOURIDYLATE SYNTHASE TRUB1"/>
    <property type="match status" value="1"/>
</dbReference>
<dbReference type="PANTHER" id="PTHR13767">
    <property type="entry name" value="TRNA-PSEUDOURIDINE SYNTHASE"/>
    <property type="match status" value="1"/>
</dbReference>
<dbReference type="Pfam" id="PF09157">
    <property type="entry name" value="TruB-C_2"/>
    <property type="match status" value="1"/>
</dbReference>
<dbReference type="Pfam" id="PF16198">
    <property type="entry name" value="TruB_C_2"/>
    <property type="match status" value="1"/>
</dbReference>
<dbReference type="Pfam" id="PF01509">
    <property type="entry name" value="TruB_N"/>
    <property type="match status" value="1"/>
</dbReference>
<dbReference type="SUPFAM" id="SSF55120">
    <property type="entry name" value="Pseudouridine synthase"/>
    <property type="match status" value="1"/>
</dbReference>
<dbReference type="SUPFAM" id="SSF88697">
    <property type="entry name" value="PUA domain-like"/>
    <property type="match status" value="1"/>
</dbReference>